<name>PHCB_PYRHA</name>
<organism>
    <name type="scientific">Pyropia haitanensis</name>
    <name type="common">Red seaweed</name>
    <name type="synonym">Porphyra haitanensis</name>
    <dbReference type="NCBI Taxonomy" id="1262161"/>
    <lineage>
        <taxon>Eukaryota</taxon>
        <taxon>Rhodophyta</taxon>
        <taxon>Bangiophyceae</taxon>
        <taxon>Bangiales</taxon>
        <taxon>Bangiaceae</taxon>
        <taxon>Pyropia</taxon>
    </lineage>
</organism>
<sequence length="172" mass="18185">MLDAFAKVVAQADARGEFLSNTQLDALSSMVAEGNKRLDVVNKINSNASAIVTNSARALFAEQPQLIQPGGNAYTSRRMAACLRDMEIVLRYVSYAMIAGDSSVLDDRCLNGLRETYQALGTPGSSVSVAVQKMKEASVALANDLTGTPQGDCSALVAELASYFDRAAVSVV</sequence>
<gene>
    <name type="primary">cpcB</name>
</gene>
<keyword id="KW-0042">Antenna complex</keyword>
<keyword id="KW-0089">Bile pigment</keyword>
<keyword id="KW-0150">Chloroplast</keyword>
<keyword id="KW-0157">Chromophore</keyword>
<keyword id="KW-0249">Electron transport</keyword>
<keyword id="KW-0472">Membrane</keyword>
<keyword id="KW-0488">Methylation</keyword>
<keyword id="KW-0602">Photosynthesis</keyword>
<keyword id="KW-0605">Phycobilisome</keyword>
<keyword id="KW-0934">Plastid</keyword>
<keyword id="KW-0793">Thylakoid</keyword>
<keyword id="KW-0813">Transport</keyword>
<proteinExistence type="inferred from homology"/>
<dbReference type="EMBL" id="DQ449071">
    <property type="protein sequence ID" value="ABE27595.1"/>
    <property type="molecule type" value="Genomic_DNA"/>
</dbReference>
<dbReference type="SMR" id="Q0ZHI6"/>
<dbReference type="GO" id="GO:0009535">
    <property type="term" value="C:chloroplast thylakoid membrane"/>
    <property type="evidence" value="ECO:0007669"/>
    <property type="project" value="UniProtKB-SubCell"/>
</dbReference>
<dbReference type="GO" id="GO:0030089">
    <property type="term" value="C:phycobilisome"/>
    <property type="evidence" value="ECO:0007669"/>
    <property type="project" value="UniProtKB-KW"/>
</dbReference>
<dbReference type="GO" id="GO:0015979">
    <property type="term" value="P:photosynthesis"/>
    <property type="evidence" value="ECO:0007669"/>
    <property type="project" value="UniProtKB-KW"/>
</dbReference>
<dbReference type="CDD" id="cd14768">
    <property type="entry name" value="PC_PEC_beta"/>
    <property type="match status" value="1"/>
</dbReference>
<dbReference type="Gene3D" id="1.10.490.20">
    <property type="entry name" value="Phycocyanins"/>
    <property type="match status" value="1"/>
</dbReference>
<dbReference type="InterPro" id="IPR009050">
    <property type="entry name" value="Globin-like_sf"/>
</dbReference>
<dbReference type="InterPro" id="IPR012128">
    <property type="entry name" value="Phycobilisome_asu/bsu"/>
</dbReference>
<dbReference type="InterPro" id="IPR038719">
    <property type="entry name" value="Phycobilisome_asu/bsu_sf"/>
</dbReference>
<dbReference type="InterPro" id="IPR006247">
    <property type="entry name" value="Phycocyanin_b"/>
</dbReference>
<dbReference type="NCBIfam" id="TIGR01339">
    <property type="entry name" value="phycocy_beta"/>
    <property type="match status" value="1"/>
</dbReference>
<dbReference type="PANTHER" id="PTHR34011:SF7">
    <property type="entry name" value="C-PHYCOCYANIN BETA SUBUNIT"/>
    <property type="match status" value="1"/>
</dbReference>
<dbReference type="PANTHER" id="PTHR34011">
    <property type="entry name" value="PHYCOBILISOME 32.1 KDA LINKER POLYPEPTIDE, PHYCOCYANIN-ASSOCIATED, ROD 2-RELATED"/>
    <property type="match status" value="1"/>
</dbReference>
<dbReference type="Pfam" id="PF00502">
    <property type="entry name" value="Phycobilisome"/>
    <property type="match status" value="1"/>
</dbReference>
<dbReference type="PIRSF" id="PIRSF000081">
    <property type="entry name" value="Phycocyanin"/>
    <property type="match status" value="1"/>
</dbReference>
<dbReference type="SUPFAM" id="SSF46458">
    <property type="entry name" value="Globin-like"/>
    <property type="match status" value="1"/>
</dbReference>
<geneLocation type="chloroplast"/>
<comment type="function">
    <text>Light-harvesting photosynthetic bile pigment-protein from the phycobiliprotein complex (phycobilisome, PBS). Phycocyanin is the major phycobiliprotein in the PBS rod.</text>
</comment>
<comment type="subunit">
    <text evidence="2">Heterodimer of an alpha and a beta subunit, which further assembles into trimers and the trimers into hexamers. The basic functional unit of phycobiliproteins is a ring-shaped hexamer formed from two back-to-back trimers contacting via the alpha chain subunits. The trimers are composed of alpha/beta subunit heterodimers arranged around a three-fold axis of symmetry. The phycoerythrins also contain a gamma subunit which is located in the center of the hexamer.</text>
</comment>
<comment type="subcellular location">
    <subcellularLocation>
        <location evidence="1">Plastid</location>
        <location evidence="1">Chloroplast thylakoid membrane</location>
        <topology evidence="1">Peripheral membrane protein</topology>
        <orientation evidence="1">Stromal side</orientation>
    </subcellularLocation>
    <text evidence="1">Part of the phycobilisome rod.</text>
</comment>
<comment type="PTM">
    <text evidence="2">Contains two covalently linked bilin chromophores.</text>
</comment>
<comment type="similarity">
    <text evidence="3">Belongs to the phycobiliprotein family.</text>
</comment>
<accession>Q0ZHI6</accession>
<protein>
    <recommendedName>
        <fullName>C-phycocyanin beta chain</fullName>
    </recommendedName>
</protein>
<reference key="1">
    <citation type="submission" date="2006-03" db="EMBL/GenBank/DDBJ databases">
        <title>Cloning and sequence analysis of phycocyanin gene of Porphyra haitanensis.</title>
        <authorList>
            <person name="Zuo Z.-H."/>
            <person name="Yan G.-L."/>
            <person name="Xu S.-Y."/>
            <person name="Chen Y.-X."/>
        </authorList>
    </citation>
    <scope>NUCLEOTIDE SEQUENCE [GENOMIC DNA]</scope>
</reference>
<evidence type="ECO:0000250" key="1"/>
<evidence type="ECO:0000250" key="2">
    <source>
        <dbReference type="UniProtKB" id="P00311"/>
    </source>
</evidence>
<evidence type="ECO:0000305" key="3"/>
<feature type="chain" id="PRO_0000277335" description="C-phycocyanin beta chain">
    <location>
        <begin position="1"/>
        <end position="172"/>
    </location>
</feature>
<feature type="binding site" description="covalent" evidence="2">
    <location>
        <position position="82"/>
    </location>
    <ligand>
        <name>(2R,3E)-phycocyanobilin</name>
        <dbReference type="ChEBI" id="CHEBI:85275"/>
        <label>1</label>
    </ligand>
</feature>
<feature type="binding site" description="covalent" evidence="2">
    <location>
        <position position="153"/>
    </location>
    <ligand>
        <name>(2R,3E)-phycocyanobilin</name>
        <dbReference type="ChEBI" id="CHEBI:85275"/>
        <label>2</label>
    </ligand>
</feature>
<feature type="modified residue" description="N4-methylasparagine" evidence="2">
    <location>
        <position position="72"/>
    </location>
</feature>